<keyword id="KW-0378">Hydrolase</keyword>
<keyword id="KW-0479">Metal-binding</keyword>
<keyword id="KW-1185">Reference proteome</keyword>
<keyword id="KW-0862">Zinc</keyword>
<organism>
    <name type="scientific">Caenorhabditis elegans</name>
    <dbReference type="NCBI Taxonomy" id="6239"/>
    <lineage>
        <taxon>Eukaryota</taxon>
        <taxon>Metazoa</taxon>
        <taxon>Ecdysozoa</taxon>
        <taxon>Nematoda</taxon>
        <taxon>Chromadorea</taxon>
        <taxon>Rhabditida</taxon>
        <taxon>Rhabditina</taxon>
        <taxon>Rhabditomorpha</taxon>
        <taxon>Rhabditoidea</taxon>
        <taxon>Rhabditidae</taxon>
        <taxon>Peloderinae</taxon>
        <taxon>Caenorhabditis</taxon>
    </lineage>
</organism>
<comment type="catalytic activity">
    <reaction evidence="4">
        <text>5,6-dihydrouracil + H2O = 3-(carbamoylamino)propanoate + H(+)</text>
        <dbReference type="Rhea" id="RHEA:16121"/>
        <dbReference type="ChEBI" id="CHEBI:11892"/>
        <dbReference type="ChEBI" id="CHEBI:15377"/>
        <dbReference type="ChEBI" id="CHEBI:15378"/>
        <dbReference type="ChEBI" id="CHEBI:15901"/>
        <dbReference type="EC" id="3.5.2.2"/>
    </reaction>
</comment>
<comment type="cofactor">
    <cofactor evidence="2">
        <name>Zn(2+)</name>
        <dbReference type="ChEBI" id="CHEBI:29105"/>
    </cofactor>
    <text evidence="2">Binds 2 Zn(2+) ions per subunit.</text>
</comment>
<comment type="subunit">
    <text evidence="2">Homotetramer.</text>
</comment>
<comment type="tissue specificity">
    <text evidence="4">Body wall muscles.</text>
</comment>
<comment type="developmental stage">
    <text evidence="4">All developmental stages.</text>
</comment>
<comment type="PTM">
    <text evidence="1">Carboxylation allows a single lysine to coordinate two zinc ions.</text>
</comment>
<comment type="similarity">
    <text evidence="5">Belongs to the metallo-dependent hydrolases superfamily. Hydantoinase/dihydropyrimidinase family.</text>
</comment>
<accession>Q18677</accession>
<proteinExistence type="evidence at protein level"/>
<gene>
    <name type="primary">dhp-2</name>
    <name type="ORF">C47E12.8</name>
</gene>
<sequence>MSLLIKNGTIVNDDAIFKSDVLVLDGRIVEIAPSIQPTPGLEVVDATDRLVIPGGIDPHTHMQLPFMGEIAKDDFHRGTEAAVAGGTTMIIDFVIPTKGESLLVAYDRWRGWADPKVVCDYGLSMAITSWGPEIAKEMEIVTGAEYGINSFKFFLAYAGVFMVRDEEFYQGMIQCAKLRALARVHAENGSVIAERCEHLLSSGITGPEGHTQSRPEELEAEATFRACTMASQANCPLYVVHVMSKGAAAAIAHHRKKGAVVFGEPIAAGLATDGSHYYNEDWLHAARYVMSPPLSRDPSTPSALMKLLAAGELHLTATDNCTFDCQQKSLGKDDFTKIPNGVNGVEDRMSVVWDKGVHAGIIDPMRFVAVTSTMAAKIFNCYPQKGRIAVGSDADIVIWNANATRTISKDTHHHAIDFNIFEGMQVHGVPEITISRGRTVWANGQLKTVQGSGQFIPLAPDSQIVFSAVDNRKKAMEPVKIDRIPYEPSALQTPDANANIVVKAPVRAAIPPGGASSIQF</sequence>
<name>DHP2_CAEEL</name>
<reference key="1">
    <citation type="journal article" date="2000" name="Gene">
        <title>Cloning and characterization of the Caenorhabditis elegans CeCRMP/DHP-1 and -2; common ancestors of CRMP and dihydropyrimidinase?</title>
        <authorList>
            <person name="Takemoto T."/>
            <person name="Sasaki Y."/>
            <person name="Hamajima N."/>
            <person name="Goshima Y."/>
            <person name="Nonaka M."/>
            <person name="Kimura H."/>
        </authorList>
    </citation>
    <scope>NUCLEOTIDE SEQUENCE [MRNA]</scope>
    <scope>CATALYTIC ACTIVITY</scope>
    <scope>TISSUE SPECIFICITY</scope>
    <scope>DEVELOPMENTAL STAGE</scope>
    <source>
        <strain>Bristol N2</strain>
    </source>
</reference>
<reference key="2">
    <citation type="journal article" date="1998" name="Science">
        <title>Genome sequence of the nematode C. elegans: a platform for investigating biology.</title>
        <authorList>
            <consortium name="The C. elegans sequencing consortium"/>
        </authorList>
    </citation>
    <scope>NUCLEOTIDE SEQUENCE [LARGE SCALE GENOMIC DNA]</scope>
    <source>
        <strain>Bristol N2</strain>
    </source>
</reference>
<reference key="3">
    <citation type="journal article" date="1998" name="Eur. J. Biochem.">
        <title>The Ulip family phosphoproteins -- common and specific properties.</title>
        <authorList>
            <person name="Byk T."/>
            <person name="Ozon S."/>
            <person name="Sobel A."/>
        </authorList>
    </citation>
    <scope>IDENTIFICATION</scope>
</reference>
<dbReference type="EC" id="3.5.2.2" evidence="4"/>
<dbReference type="EMBL" id="AB040993">
    <property type="protein sequence ID" value="BAB21561.1"/>
    <property type="molecule type" value="mRNA"/>
</dbReference>
<dbReference type="EMBL" id="Z68882">
    <property type="protein sequence ID" value="CAA93104.1"/>
    <property type="molecule type" value="Genomic_DNA"/>
</dbReference>
<dbReference type="PIR" id="T20007">
    <property type="entry name" value="T20007"/>
</dbReference>
<dbReference type="RefSeq" id="NP_501797.1">
    <property type="nucleotide sequence ID" value="NM_069396.8"/>
</dbReference>
<dbReference type="SMR" id="Q18677"/>
<dbReference type="BioGRID" id="42955">
    <property type="interactions" value="4"/>
</dbReference>
<dbReference type="FunCoup" id="Q18677">
    <property type="interactions" value="1149"/>
</dbReference>
<dbReference type="STRING" id="6239.C47E12.8.1"/>
<dbReference type="iPTMnet" id="Q18677"/>
<dbReference type="PaxDb" id="6239-C47E12.8"/>
<dbReference type="PeptideAtlas" id="Q18677"/>
<dbReference type="EnsemblMetazoa" id="C47E12.8.1">
    <property type="protein sequence ID" value="C47E12.8.1"/>
    <property type="gene ID" value="WBGene00000964"/>
</dbReference>
<dbReference type="GeneID" id="177852"/>
<dbReference type="KEGG" id="cel:CELE_C47E12.8"/>
<dbReference type="UCSC" id="C47E12.8">
    <property type="organism name" value="c. elegans"/>
</dbReference>
<dbReference type="AGR" id="WB:WBGene00000964"/>
<dbReference type="CTD" id="177852"/>
<dbReference type="WormBase" id="C47E12.8">
    <property type="protein sequence ID" value="CE05452"/>
    <property type="gene ID" value="WBGene00000964"/>
    <property type="gene designation" value="dhp-2"/>
</dbReference>
<dbReference type="eggNOG" id="KOG2584">
    <property type="taxonomic scope" value="Eukaryota"/>
</dbReference>
<dbReference type="GeneTree" id="ENSGT01030000234527"/>
<dbReference type="HOGENOM" id="CLU_015572_2_2_1"/>
<dbReference type="InParanoid" id="Q18677"/>
<dbReference type="OMA" id="SAETHHM"/>
<dbReference type="OrthoDB" id="10258955at2759"/>
<dbReference type="PhylomeDB" id="Q18677"/>
<dbReference type="BRENDA" id="3.5.2.2">
    <property type="organism ID" value="1045"/>
</dbReference>
<dbReference type="Reactome" id="R-CEL-399956">
    <property type="pathway name" value="CRMPs in Sema3A signaling"/>
</dbReference>
<dbReference type="Reactome" id="R-CEL-73621">
    <property type="pathway name" value="Pyrimidine catabolism"/>
</dbReference>
<dbReference type="PRO" id="PR:Q18677"/>
<dbReference type="Proteomes" id="UP000001940">
    <property type="component" value="Chromosome IV"/>
</dbReference>
<dbReference type="Bgee" id="WBGene00000964">
    <property type="expression patterns" value="Expressed in larva and 3 other cell types or tissues"/>
</dbReference>
<dbReference type="GO" id="GO:0005737">
    <property type="term" value="C:cytoplasm"/>
    <property type="evidence" value="ECO:0000314"/>
    <property type="project" value="WormBase"/>
</dbReference>
<dbReference type="GO" id="GO:0005829">
    <property type="term" value="C:cytosol"/>
    <property type="evidence" value="ECO:0000318"/>
    <property type="project" value="GO_Central"/>
</dbReference>
<dbReference type="GO" id="GO:0004157">
    <property type="term" value="F:dihydropyrimidinase activity"/>
    <property type="evidence" value="ECO:0000250"/>
    <property type="project" value="WormBase"/>
</dbReference>
<dbReference type="GO" id="GO:0016812">
    <property type="term" value="F:hydrolase activity, acting on carbon-nitrogen (but not peptide) bonds, in cyclic amides"/>
    <property type="evidence" value="ECO:0000314"/>
    <property type="project" value="WormBase"/>
</dbReference>
<dbReference type="GO" id="GO:0046872">
    <property type="term" value="F:metal ion binding"/>
    <property type="evidence" value="ECO:0007669"/>
    <property type="project" value="UniProtKB-KW"/>
</dbReference>
<dbReference type="GO" id="GO:0046113">
    <property type="term" value="P:nucleobase catabolic process"/>
    <property type="evidence" value="ECO:0000250"/>
    <property type="project" value="WormBase"/>
</dbReference>
<dbReference type="GO" id="GO:0006208">
    <property type="term" value="P:pyrimidine nucleobase catabolic process"/>
    <property type="evidence" value="ECO:0000314"/>
    <property type="project" value="WormBase"/>
</dbReference>
<dbReference type="CDD" id="cd01314">
    <property type="entry name" value="D-HYD"/>
    <property type="match status" value="1"/>
</dbReference>
<dbReference type="FunFam" id="3.20.20.140:FF:000001">
    <property type="entry name" value="Dihydropyrimidinase like 3"/>
    <property type="match status" value="1"/>
</dbReference>
<dbReference type="Gene3D" id="3.20.20.140">
    <property type="entry name" value="Metal-dependent hydrolases"/>
    <property type="match status" value="1"/>
</dbReference>
<dbReference type="Gene3D" id="2.30.40.10">
    <property type="entry name" value="Urease, subunit C, domain 1"/>
    <property type="match status" value="1"/>
</dbReference>
<dbReference type="InterPro" id="IPR006680">
    <property type="entry name" value="Amidohydro-rel"/>
</dbReference>
<dbReference type="InterPro" id="IPR011778">
    <property type="entry name" value="Hydantoinase/dihydroPyrase"/>
</dbReference>
<dbReference type="InterPro" id="IPR011059">
    <property type="entry name" value="Metal-dep_hydrolase_composite"/>
</dbReference>
<dbReference type="InterPro" id="IPR032466">
    <property type="entry name" value="Metal_Hydrolase"/>
</dbReference>
<dbReference type="InterPro" id="IPR050378">
    <property type="entry name" value="Metallo-dep_Hydrolases_sf"/>
</dbReference>
<dbReference type="NCBIfam" id="TIGR02033">
    <property type="entry name" value="D-hydantoinase"/>
    <property type="match status" value="1"/>
</dbReference>
<dbReference type="PANTHER" id="PTHR11647:SF1">
    <property type="entry name" value="COLLAPSIN RESPONSE MEDIATOR PROTEIN"/>
    <property type="match status" value="1"/>
</dbReference>
<dbReference type="PANTHER" id="PTHR11647">
    <property type="entry name" value="HYDRANTOINASE/DIHYDROPYRIMIDINASE FAMILY MEMBER"/>
    <property type="match status" value="1"/>
</dbReference>
<dbReference type="Pfam" id="PF01979">
    <property type="entry name" value="Amidohydro_1"/>
    <property type="match status" value="1"/>
</dbReference>
<dbReference type="SUPFAM" id="SSF51338">
    <property type="entry name" value="Composite domain of metallo-dependent hydrolases"/>
    <property type="match status" value="2"/>
</dbReference>
<dbReference type="SUPFAM" id="SSF51556">
    <property type="entry name" value="Metallo-dependent hydrolases"/>
    <property type="match status" value="1"/>
</dbReference>
<evidence type="ECO:0000250" key="1"/>
<evidence type="ECO:0000250" key="2">
    <source>
        <dbReference type="UniProtKB" id="Q55DL0"/>
    </source>
</evidence>
<evidence type="ECO:0000250" key="3">
    <source>
        <dbReference type="UniProtKB" id="Q9P903"/>
    </source>
</evidence>
<evidence type="ECO:0000269" key="4">
    <source>
    </source>
</evidence>
<evidence type="ECO:0000305" key="5"/>
<protein>
    <recommendedName>
        <fullName>Dihydropyrimidinase 2</fullName>
        <ecNumber evidence="4">3.5.2.2</ecNumber>
    </recommendedName>
    <alternativeName>
        <fullName>CeCRMP/DHP-2</fullName>
    </alternativeName>
    <alternativeName>
        <fullName>UlipA</fullName>
    </alternativeName>
</protein>
<feature type="chain" id="PRO_0000165931" description="Dihydropyrimidinase 2">
    <location>
        <begin position="1"/>
        <end position="520"/>
    </location>
</feature>
<feature type="binding site" evidence="3">
    <location>
        <position position="59"/>
    </location>
    <ligand>
        <name>Zn(2+)</name>
        <dbReference type="ChEBI" id="CHEBI:29105"/>
        <label>1</label>
    </ligand>
</feature>
<feature type="binding site" evidence="3">
    <location>
        <position position="61"/>
    </location>
    <ligand>
        <name>Zn(2+)</name>
        <dbReference type="ChEBI" id="CHEBI:29105"/>
        <label>1</label>
    </ligand>
</feature>
<feature type="binding site" description="via carbamate group" evidence="3">
    <location>
        <position position="152"/>
    </location>
    <ligand>
        <name>Zn(2+)</name>
        <dbReference type="ChEBI" id="CHEBI:29105"/>
        <label>1</label>
    </ligand>
</feature>
<feature type="binding site" description="via carbamate group" evidence="3">
    <location>
        <position position="152"/>
    </location>
    <ligand>
        <name>Zn(2+)</name>
        <dbReference type="ChEBI" id="CHEBI:29105"/>
        <label>2</label>
    </ligand>
</feature>
<feature type="binding site" evidence="3">
    <location>
        <position position="157"/>
    </location>
    <ligand>
        <name>substrate</name>
    </ligand>
</feature>
<feature type="binding site" evidence="3">
    <location>
        <position position="185"/>
    </location>
    <ligand>
        <name>Zn(2+)</name>
        <dbReference type="ChEBI" id="CHEBI:29105"/>
        <label>2</label>
    </ligand>
</feature>
<feature type="binding site" evidence="3">
    <location>
        <position position="241"/>
    </location>
    <ligand>
        <name>Zn(2+)</name>
        <dbReference type="ChEBI" id="CHEBI:29105"/>
        <label>2</label>
    </ligand>
</feature>
<feature type="binding site" evidence="3">
    <location>
        <position position="291"/>
    </location>
    <ligand>
        <name>substrate</name>
    </ligand>
</feature>
<feature type="binding site" evidence="3">
    <location>
        <position position="319"/>
    </location>
    <ligand>
        <name>Zn(2+)</name>
        <dbReference type="ChEBI" id="CHEBI:29105"/>
        <label>1</label>
    </ligand>
</feature>
<feature type="binding site" evidence="3">
    <location>
        <position position="340"/>
    </location>
    <ligand>
        <name>substrate</name>
    </ligand>
</feature>
<feature type="modified residue" description="N6-carboxylysine" evidence="3">
    <location>
        <position position="152"/>
    </location>
</feature>